<name>Y1231_ACTP2</name>
<proteinExistence type="inferred from homology"/>
<comment type="function">
    <text evidence="1">Nucleotide-binding protein.</text>
</comment>
<comment type="similarity">
    <text evidence="1">Belongs to the YajQ family.</text>
</comment>
<accession>A3N1N1</accession>
<evidence type="ECO:0000255" key="1">
    <source>
        <dbReference type="HAMAP-Rule" id="MF_00632"/>
    </source>
</evidence>
<dbReference type="EMBL" id="CP000569">
    <property type="protein sequence ID" value="ABN74317.1"/>
    <property type="molecule type" value="Genomic_DNA"/>
</dbReference>
<dbReference type="RefSeq" id="WP_009875523.1">
    <property type="nucleotide sequence ID" value="NC_009053.1"/>
</dbReference>
<dbReference type="SMR" id="A3N1N1"/>
<dbReference type="STRING" id="416269.APL_1231"/>
<dbReference type="EnsemblBacteria" id="ABN74317">
    <property type="protein sequence ID" value="ABN74317"/>
    <property type="gene ID" value="APL_1231"/>
</dbReference>
<dbReference type="KEGG" id="apl:APL_1231"/>
<dbReference type="eggNOG" id="COG1666">
    <property type="taxonomic scope" value="Bacteria"/>
</dbReference>
<dbReference type="HOGENOM" id="CLU_099839_1_0_6"/>
<dbReference type="Proteomes" id="UP000001432">
    <property type="component" value="Chromosome"/>
</dbReference>
<dbReference type="GO" id="GO:0005829">
    <property type="term" value="C:cytosol"/>
    <property type="evidence" value="ECO:0007669"/>
    <property type="project" value="TreeGrafter"/>
</dbReference>
<dbReference type="GO" id="GO:0000166">
    <property type="term" value="F:nucleotide binding"/>
    <property type="evidence" value="ECO:0007669"/>
    <property type="project" value="TreeGrafter"/>
</dbReference>
<dbReference type="CDD" id="cd11740">
    <property type="entry name" value="YajQ_like"/>
    <property type="match status" value="1"/>
</dbReference>
<dbReference type="FunFam" id="3.30.70.860:FF:000001">
    <property type="entry name" value="UPF0234 protein YajQ"/>
    <property type="match status" value="1"/>
</dbReference>
<dbReference type="FunFam" id="3.30.70.990:FF:000001">
    <property type="entry name" value="UPF0234 protein YajQ"/>
    <property type="match status" value="1"/>
</dbReference>
<dbReference type="Gene3D" id="3.30.70.860">
    <property type="match status" value="1"/>
</dbReference>
<dbReference type="Gene3D" id="3.30.70.990">
    <property type="entry name" value="YajQ-like, domain 2"/>
    <property type="match status" value="1"/>
</dbReference>
<dbReference type="HAMAP" id="MF_00632">
    <property type="entry name" value="YajQ"/>
    <property type="match status" value="1"/>
</dbReference>
<dbReference type="InterPro" id="IPR007551">
    <property type="entry name" value="DUF520"/>
</dbReference>
<dbReference type="InterPro" id="IPR035571">
    <property type="entry name" value="UPF0234-like_C"/>
</dbReference>
<dbReference type="InterPro" id="IPR035570">
    <property type="entry name" value="UPF0234_N"/>
</dbReference>
<dbReference type="InterPro" id="IPR036183">
    <property type="entry name" value="YajQ-like_sf"/>
</dbReference>
<dbReference type="NCBIfam" id="NF003819">
    <property type="entry name" value="PRK05412.1"/>
    <property type="match status" value="1"/>
</dbReference>
<dbReference type="PANTHER" id="PTHR30476">
    <property type="entry name" value="UPF0234 PROTEIN YAJQ"/>
    <property type="match status" value="1"/>
</dbReference>
<dbReference type="PANTHER" id="PTHR30476:SF0">
    <property type="entry name" value="UPF0234 PROTEIN YAJQ"/>
    <property type="match status" value="1"/>
</dbReference>
<dbReference type="Pfam" id="PF04461">
    <property type="entry name" value="DUF520"/>
    <property type="match status" value="1"/>
</dbReference>
<dbReference type="SUPFAM" id="SSF89963">
    <property type="entry name" value="YajQ-like"/>
    <property type="match status" value="2"/>
</dbReference>
<sequence length="163" mass="18496">MPSFDIVSEITMHEVRNAVENANRVLSTRYDFRGVEAVIELNEKNESVKLTTESDFQLEQLIEILIGSCVKRGIEHNSLDIPSEAEHHGKLYSKEVKLKQGIETEMAKKITKLIKDSKIKVQTQIQGEQVRVTGKSRDDLQAAIQLVKGAELGQPFQFNNFRD</sequence>
<feature type="chain" id="PRO_1000051711" description="Nucleotide-binding protein APL_1231">
    <location>
        <begin position="1"/>
        <end position="163"/>
    </location>
</feature>
<keyword id="KW-0547">Nucleotide-binding</keyword>
<keyword id="KW-1185">Reference proteome</keyword>
<protein>
    <recommendedName>
        <fullName evidence="1">Nucleotide-binding protein APL_1231</fullName>
    </recommendedName>
</protein>
<organism>
    <name type="scientific">Actinobacillus pleuropneumoniae serotype 5b (strain L20)</name>
    <dbReference type="NCBI Taxonomy" id="416269"/>
    <lineage>
        <taxon>Bacteria</taxon>
        <taxon>Pseudomonadati</taxon>
        <taxon>Pseudomonadota</taxon>
        <taxon>Gammaproteobacteria</taxon>
        <taxon>Pasteurellales</taxon>
        <taxon>Pasteurellaceae</taxon>
        <taxon>Actinobacillus</taxon>
    </lineage>
</organism>
<gene>
    <name type="ordered locus">APL_1231</name>
</gene>
<reference key="1">
    <citation type="journal article" date="2008" name="J. Bacteriol.">
        <title>The complete genome sequence of Actinobacillus pleuropneumoniae L20 (serotype 5b).</title>
        <authorList>
            <person name="Foote S.J."/>
            <person name="Bosse J.T."/>
            <person name="Bouevitch A.B."/>
            <person name="Langford P.R."/>
            <person name="Young N.M."/>
            <person name="Nash J.H.E."/>
        </authorList>
    </citation>
    <scope>NUCLEOTIDE SEQUENCE [LARGE SCALE GENOMIC DNA]</scope>
    <source>
        <strain>L20</strain>
    </source>
</reference>